<protein>
    <recommendedName>
        <fullName evidence="1">Membrane protein insertase YidC</fullName>
    </recommendedName>
    <alternativeName>
        <fullName evidence="1">Foldase YidC</fullName>
    </alternativeName>
    <alternativeName>
        <fullName evidence="1">Membrane integrase YidC</fullName>
    </alternativeName>
    <alternativeName>
        <fullName evidence="1">Membrane protein YidC</fullName>
    </alternativeName>
</protein>
<name>YIDC_ANASK</name>
<reference key="1">
    <citation type="submission" date="2008-08" db="EMBL/GenBank/DDBJ databases">
        <title>Complete sequence of Anaeromyxobacter sp. K.</title>
        <authorList>
            <consortium name="US DOE Joint Genome Institute"/>
            <person name="Lucas S."/>
            <person name="Copeland A."/>
            <person name="Lapidus A."/>
            <person name="Glavina del Rio T."/>
            <person name="Dalin E."/>
            <person name="Tice H."/>
            <person name="Bruce D."/>
            <person name="Goodwin L."/>
            <person name="Pitluck S."/>
            <person name="Saunders E."/>
            <person name="Brettin T."/>
            <person name="Detter J.C."/>
            <person name="Han C."/>
            <person name="Larimer F."/>
            <person name="Land M."/>
            <person name="Hauser L."/>
            <person name="Kyrpides N."/>
            <person name="Ovchinnikiva G."/>
            <person name="Beliaev A."/>
        </authorList>
    </citation>
    <scope>NUCLEOTIDE SEQUENCE [LARGE SCALE GENOMIC DNA]</scope>
    <source>
        <strain>K</strain>
    </source>
</reference>
<proteinExistence type="inferred from homology"/>
<gene>
    <name evidence="1" type="primary">yidC</name>
    <name type="ordered locus">AnaeK_4495</name>
</gene>
<accession>B4UKG1</accession>
<organism>
    <name type="scientific">Anaeromyxobacter sp. (strain K)</name>
    <dbReference type="NCBI Taxonomy" id="447217"/>
    <lineage>
        <taxon>Bacteria</taxon>
        <taxon>Pseudomonadati</taxon>
        <taxon>Myxococcota</taxon>
        <taxon>Myxococcia</taxon>
        <taxon>Myxococcales</taxon>
        <taxon>Cystobacterineae</taxon>
        <taxon>Anaeromyxobacteraceae</taxon>
        <taxon>Anaeromyxobacter</taxon>
    </lineage>
</organism>
<keyword id="KW-0997">Cell inner membrane</keyword>
<keyword id="KW-1003">Cell membrane</keyword>
<keyword id="KW-0143">Chaperone</keyword>
<keyword id="KW-0472">Membrane</keyword>
<keyword id="KW-0653">Protein transport</keyword>
<keyword id="KW-0812">Transmembrane</keyword>
<keyword id="KW-1133">Transmembrane helix</keyword>
<keyword id="KW-0813">Transport</keyword>
<sequence>MGPDNRRILLATVLSVGILILWQVIFPTKKVPPKPAPPPAAEVAKPAAPASPAPGAAAPAVPAPPPDAPEETVKLAGKGFEATLTTYGGALKSLRLEGDKFRKQEKDREVQIDLVHVTDGQPYPLSLSASPELGGAADVAADPGARAPMRIVAKDASSVTFEGRVGNLAARKTFRVTGKPYELALDVELSGGAGNGTVGVLYPAFMPPDTKSGGIFSGPPLDFVRPVCRAGTTTERFDLAKEGAPEKLEGQVSWAGVDQHYFVAAVLPAEPIGTCTFVRGPVKGAGLAALAVPVEGGARKLSLTVYAGPKDLDTLRGYGRGFESAIDYGAVAKFFALFARGLLYVMRWLEAIVRNWGVAIILLTVLVRLVLFPLTYKSMQSMNEMRKLQPEIEKLKAKFGDDREKMNLAVMQLYQKHKVNPLGGCLPMLLQMPVWFALYAALQTSVELYREPFLWMKDLTAHDPYFILPIAMGISSFVMQKLSPQPADNAQAKMMLYFFPGFFTVIMLFVPGGLTLYIFVNNLLSIVQQQLMMKHQQAAPAPAAGK</sequence>
<comment type="function">
    <text evidence="1">Required for the insertion and/or proper folding and/or complex formation of integral membrane proteins into the membrane. Involved in integration of membrane proteins that insert both dependently and independently of the Sec translocase complex, as well as at least some lipoproteins. Aids folding of multispanning membrane proteins.</text>
</comment>
<comment type="subunit">
    <text evidence="1">Interacts with the Sec translocase complex via SecD. Specifically interacts with transmembrane segments of nascent integral membrane proteins during membrane integration.</text>
</comment>
<comment type="subcellular location">
    <subcellularLocation>
        <location evidence="1">Cell inner membrane</location>
        <topology evidence="1">Multi-pass membrane protein</topology>
    </subcellularLocation>
</comment>
<comment type="similarity">
    <text evidence="1">Belongs to the OXA1/ALB3/YidC family. Type 1 subfamily.</text>
</comment>
<feature type="chain" id="PRO_1000187628" description="Membrane protein insertase YidC">
    <location>
        <begin position="1"/>
        <end position="546"/>
    </location>
</feature>
<feature type="transmembrane region" description="Helical" evidence="1">
    <location>
        <begin position="8"/>
        <end position="28"/>
    </location>
</feature>
<feature type="transmembrane region" description="Helical" evidence="1">
    <location>
        <begin position="326"/>
        <end position="346"/>
    </location>
</feature>
<feature type="transmembrane region" description="Helical" evidence="1">
    <location>
        <begin position="356"/>
        <end position="376"/>
    </location>
</feature>
<feature type="transmembrane region" description="Helical" evidence="1">
    <location>
        <begin position="422"/>
        <end position="442"/>
    </location>
</feature>
<feature type="transmembrane region" description="Helical" evidence="1">
    <location>
        <begin position="459"/>
        <end position="479"/>
    </location>
</feature>
<feature type="transmembrane region" description="Helical" evidence="1">
    <location>
        <begin position="498"/>
        <end position="518"/>
    </location>
</feature>
<feature type="region of interest" description="Disordered" evidence="2">
    <location>
        <begin position="31"/>
        <end position="70"/>
    </location>
</feature>
<feature type="compositionally biased region" description="Low complexity" evidence="2">
    <location>
        <begin position="41"/>
        <end position="60"/>
    </location>
</feature>
<dbReference type="EMBL" id="CP001131">
    <property type="protein sequence ID" value="ACG75697.1"/>
    <property type="molecule type" value="Genomic_DNA"/>
</dbReference>
<dbReference type="RefSeq" id="WP_012528440.1">
    <property type="nucleotide sequence ID" value="NC_011145.1"/>
</dbReference>
<dbReference type="SMR" id="B4UKG1"/>
<dbReference type="KEGG" id="ank:AnaeK_4495"/>
<dbReference type="HOGENOM" id="CLU_016535_3_0_7"/>
<dbReference type="OrthoDB" id="9780552at2"/>
<dbReference type="Proteomes" id="UP000001871">
    <property type="component" value="Chromosome"/>
</dbReference>
<dbReference type="GO" id="GO:0005886">
    <property type="term" value="C:plasma membrane"/>
    <property type="evidence" value="ECO:0007669"/>
    <property type="project" value="UniProtKB-SubCell"/>
</dbReference>
<dbReference type="GO" id="GO:0032977">
    <property type="term" value="F:membrane insertase activity"/>
    <property type="evidence" value="ECO:0007669"/>
    <property type="project" value="InterPro"/>
</dbReference>
<dbReference type="GO" id="GO:0051205">
    <property type="term" value="P:protein insertion into membrane"/>
    <property type="evidence" value="ECO:0007669"/>
    <property type="project" value="TreeGrafter"/>
</dbReference>
<dbReference type="GO" id="GO:0015031">
    <property type="term" value="P:protein transport"/>
    <property type="evidence" value="ECO:0007669"/>
    <property type="project" value="UniProtKB-KW"/>
</dbReference>
<dbReference type="CDD" id="cd20070">
    <property type="entry name" value="5TM_YidC_Alb3"/>
    <property type="match status" value="1"/>
</dbReference>
<dbReference type="CDD" id="cd19961">
    <property type="entry name" value="EcYidC-like_peri"/>
    <property type="match status" value="1"/>
</dbReference>
<dbReference type="Gene3D" id="2.70.98.90">
    <property type="match status" value="1"/>
</dbReference>
<dbReference type="HAMAP" id="MF_01810">
    <property type="entry name" value="YidC_type1"/>
    <property type="match status" value="1"/>
</dbReference>
<dbReference type="InterPro" id="IPR019998">
    <property type="entry name" value="Membr_insert_YidC"/>
</dbReference>
<dbReference type="InterPro" id="IPR028053">
    <property type="entry name" value="Membr_insert_YidC_N"/>
</dbReference>
<dbReference type="InterPro" id="IPR001708">
    <property type="entry name" value="YidC/ALB3/OXA1/COX18"/>
</dbReference>
<dbReference type="InterPro" id="IPR028055">
    <property type="entry name" value="YidC/Oxa/ALB_C"/>
</dbReference>
<dbReference type="InterPro" id="IPR047196">
    <property type="entry name" value="YidC_ALB_C"/>
</dbReference>
<dbReference type="InterPro" id="IPR038221">
    <property type="entry name" value="YidC_periplasmic_sf"/>
</dbReference>
<dbReference type="NCBIfam" id="TIGR03593">
    <property type="entry name" value="yidC_nterm"/>
    <property type="match status" value="1"/>
</dbReference>
<dbReference type="NCBIfam" id="TIGR03592">
    <property type="entry name" value="yidC_oxa1_cterm"/>
    <property type="match status" value="1"/>
</dbReference>
<dbReference type="PANTHER" id="PTHR12428:SF65">
    <property type="entry name" value="CYTOCHROME C OXIDASE ASSEMBLY PROTEIN COX18, MITOCHONDRIAL"/>
    <property type="match status" value="1"/>
</dbReference>
<dbReference type="PANTHER" id="PTHR12428">
    <property type="entry name" value="OXA1"/>
    <property type="match status" value="1"/>
</dbReference>
<dbReference type="Pfam" id="PF02096">
    <property type="entry name" value="60KD_IMP"/>
    <property type="match status" value="1"/>
</dbReference>
<dbReference type="Pfam" id="PF14849">
    <property type="entry name" value="YidC_periplas"/>
    <property type="match status" value="1"/>
</dbReference>
<dbReference type="PRINTS" id="PR00701">
    <property type="entry name" value="60KDINNERMP"/>
</dbReference>
<dbReference type="PRINTS" id="PR01900">
    <property type="entry name" value="YIDCPROTEIN"/>
</dbReference>
<evidence type="ECO:0000255" key="1">
    <source>
        <dbReference type="HAMAP-Rule" id="MF_01810"/>
    </source>
</evidence>
<evidence type="ECO:0000256" key="2">
    <source>
        <dbReference type="SAM" id="MobiDB-lite"/>
    </source>
</evidence>